<feature type="chain" id="PRO_0000448412" description="Cytochrome P450 monooxygenase ABA1">
    <location>
        <begin position="1"/>
        <end position="512"/>
    </location>
</feature>
<feature type="transmembrane region" description="Helical" evidence="3">
    <location>
        <begin position="13"/>
        <end position="32"/>
    </location>
</feature>
<feature type="binding site" description="axial binding residue" evidence="1">
    <location>
        <position position="458"/>
    </location>
    <ligand>
        <name>heme</name>
        <dbReference type="ChEBI" id="CHEBI:30413"/>
    </ligand>
    <ligandPart>
        <name>Fe</name>
        <dbReference type="ChEBI" id="CHEBI:18248"/>
    </ligandPart>
</feature>
<keyword id="KW-0349">Heme</keyword>
<keyword id="KW-0408">Iron</keyword>
<keyword id="KW-0472">Membrane</keyword>
<keyword id="KW-0479">Metal-binding</keyword>
<keyword id="KW-0503">Monooxygenase</keyword>
<keyword id="KW-0560">Oxidoreductase</keyword>
<keyword id="KW-1185">Reference proteome</keyword>
<keyword id="KW-0812">Transmembrane</keyword>
<keyword id="KW-1133">Transmembrane helix</keyword>
<keyword id="KW-0843">Virulence</keyword>
<sequence>MMLQQVADALATHWLSGILAIATVYLATSYIIDYRRLRAFPGPPLGSFSYLWLAYNALQGRQGSIFYEVMKRYRVPEHSFVRIGPNDLMTDSPEVVRHMSSARSTYLRSSWYRTSKLDPSGDSLLSIMDTAHHDALKAKAGRGYAGRDNRNLESDIDDQLRRLIGLLERKYLSGGGDASSFRPVDMATTMQYFTLDSITKLAYSSAFGFLDLDTDVYGYIKAIRDAAPPIIVCSEWPLAGRIFFSPPFLKMFGPTPKDKSGVGKLMGTLRQVVASRFGPDAKDQPDMLGSFVRNGLSQHQCEQEVILQIVAGSDTTATALRGTLLQLCSTPMVYLKLQKEIDEAVRSGMVGEGVISQETARKLPYLQAVIYEGLRLNPPFTGALMKEVPPGGDEIDGVFIPAGVRIGVSAKGIQMRQDVYGHDVDVFRPERWTECDEQRRMRMAANTELVFGYGRWMCAGKNVAFMELNKVYFELLRRFDFQVVDTKTPVKEESFNVMFSKDMFMKVTKRVL</sequence>
<organism>
    <name type="scientific">Pyricularia oryzae (strain 70-15 / ATCC MYA-4617 / FGSC 8958)</name>
    <name type="common">Rice blast fungus</name>
    <name type="synonym">Magnaporthe oryzae</name>
    <dbReference type="NCBI Taxonomy" id="242507"/>
    <lineage>
        <taxon>Eukaryota</taxon>
        <taxon>Fungi</taxon>
        <taxon>Dikarya</taxon>
        <taxon>Ascomycota</taxon>
        <taxon>Pezizomycotina</taxon>
        <taxon>Sordariomycetes</taxon>
        <taxon>Sordariomycetidae</taxon>
        <taxon>Magnaporthales</taxon>
        <taxon>Pyriculariaceae</taxon>
        <taxon>Pyricularia</taxon>
    </lineage>
</organism>
<gene>
    <name evidence="5" type="primary">ABA1</name>
    <name type="ORF">MGG_07626</name>
</gene>
<accession>G4N2Y3</accession>
<name>ABA1_PYRO7</name>
<evidence type="ECO:0000250" key="1">
    <source>
        <dbReference type="UniProtKB" id="P04798"/>
    </source>
</evidence>
<evidence type="ECO:0000250" key="2">
    <source>
        <dbReference type="UniProtKB" id="Q6H9H9"/>
    </source>
</evidence>
<evidence type="ECO:0000255" key="3"/>
<evidence type="ECO:0000269" key="4">
    <source>
    </source>
</evidence>
<evidence type="ECO:0000303" key="5">
    <source>
    </source>
</evidence>
<evidence type="ECO:0000305" key="6"/>
<evidence type="ECO:0000305" key="7">
    <source>
    </source>
</evidence>
<proteinExistence type="evidence at transcript level"/>
<comment type="function">
    <text evidence="2 4">Cytochrome P450 monooxygenase involved in the biosynthesis of abscisic acid (ABA), a phytohormone that acts antagonistically toward salicylic acid (SA), jasmonic acid (JA) and ethylene (ETH) signaling, to impede plant defense responses (PubMed:26648962). During pathogen-host interaction, ABA plays a dual role in disease severity by increasing plant susceptibility and accelerating pathogenesis in the fungus itself (PubMed:26648962). The first step of the pathway catalyzes the reaction from farnesyl diphosphate to alpha-ionylideneethane performed by the alpha-ionylideneethane synthase ABA3 via a three-step reaction mechanism involving 2 neutral intermediates, beta-farnesene and allofarnesene (By similarity). The cytochrome P450 monooxygenase ABA1 might then be involved in the conversion of alpha-ionylideneethane to alpha-ionylideneacetic acid (By similarity). Alpha-ionylideneacetic acid is further converted to abscisic acid in 2 steps involving the cytochrome P450 monooxygenase ABA2 and the short-chain dehydrogenase/reductase ABA4, via the intermediates 1'-deoxy-ABA or 1',4'-trans-diol-ABA, depending on the order of action of these 2 enzymes (By similarity). ABA2 is responsible for the hydroxylation of carbon atom C-1' and ABA4 might be involved in the oxidation of the C-4' carbon atom (By similarity).</text>
</comment>
<comment type="cofactor">
    <cofactor evidence="1">
        <name>heme</name>
        <dbReference type="ChEBI" id="CHEBI:30413"/>
    </cofactor>
</comment>
<comment type="pathway">
    <text evidence="4">Hormone biosynthesis.</text>
</comment>
<comment type="subcellular location">
    <subcellularLocation>
        <location evidence="3">Membrane</location>
        <topology evidence="3">Single-pass membrane protein</topology>
    </subcellularLocation>
</comment>
<comment type="induction">
    <text evidence="4">Expression is up-regulated in spores.</text>
</comment>
<comment type="similarity">
    <text evidence="6">Belongs to the cytochrome P450 family.</text>
</comment>
<dbReference type="EC" id="1.-.-.-" evidence="7"/>
<dbReference type="EMBL" id="CM001233">
    <property type="protein sequence ID" value="EHA51742.1"/>
    <property type="molecule type" value="Genomic_DNA"/>
</dbReference>
<dbReference type="RefSeq" id="XP_003711549.1">
    <property type="nucleotide sequence ID" value="XM_003711501.1"/>
</dbReference>
<dbReference type="SMR" id="G4N2Y3"/>
<dbReference type="EnsemblFungi" id="MGG_07626T0">
    <property type="protein sequence ID" value="MGG_07626T0"/>
    <property type="gene ID" value="MGG_07626"/>
</dbReference>
<dbReference type="GeneID" id="2683546"/>
<dbReference type="KEGG" id="mgr:MGG_07626"/>
<dbReference type="VEuPathDB" id="FungiDB:MGG_07626"/>
<dbReference type="eggNOG" id="KOG0156">
    <property type="taxonomic scope" value="Eukaryota"/>
</dbReference>
<dbReference type="HOGENOM" id="CLU_001570_14_0_1"/>
<dbReference type="InParanoid" id="G4N2Y3"/>
<dbReference type="OMA" id="PWHEFNV"/>
<dbReference type="OrthoDB" id="3934656at2759"/>
<dbReference type="Proteomes" id="UP000009058">
    <property type="component" value="Chromosome 3"/>
</dbReference>
<dbReference type="GO" id="GO:0016020">
    <property type="term" value="C:membrane"/>
    <property type="evidence" value="ECO:0000317"/>
    <property type="project" value="PAMGO_MGG"/>
</dbReference>
<dbReference type="GO" id="GO:0020037">
    <property type="term" value="F:heme binding"/>
    <property type="evidence" value="ECO:0000317"/>
    <property type="project" value="PAMGO_MGG"/>
</dbReference>
<dbReference type="GO" id="GO:0005506">
    <property type="term" value="F:iron ion binding"/>
    <property type="evidence" value="ECO:0000317"/>
    <property type="project" value="PAMGO_MGG"/>
</dbReference>
<dbReference type="GO" id="GO:0046872">
    <property type="term" value="F:metal ion binding"/>
    <property type="evidence" value="ECO:0000317"/>
    <property type="project" value="PAMGO_MGG"/>
</dbReference>
<dbReference type="GO" id="GO:0004497">
    <property type="term" value="F:monooxygenase activity"/>
    <property type="evidence" value="ECO:0000317"/>
    <property type="project" value="PAMGO_MGG"/>
</dbReference>
<dbReference type="GO" id="GO:0016491">
    <property type="term" value="F:oxidoreductase activity"/>
    <property type="evidence" value="ECO:0000317"/>
    <property type="project" value="PAMGO_MGG"/>
</dbReference>
<dbReference type="GO" id="GO:0016705">
    <property type="term" value="F:oxidoreductase activity, acting on paired donors, with incorporation or reduction of molecular oxygen"/>
    <property type="evidence" value="ECO:0007669"/>
    <property type="project" value="InterPro"/>
</dbReference>
<dbReference type="GO" id="GO:0009688">
    <property type="term" value="P:abscisic acid biosynthetic process"/>
    <property type="evidence" value="ECO:0000250"/>
    <property type="project" value="GO_Central"/>
</dbReference>
<dbReference type="CDD" id="cd11060">
    <property type="entry name" value="CYP57A1-like"/>
    <property type="match status" value="1"/>
</dbReference>
<dbReference type="FunFam" id="1.10.630.10:FF:000076">
    <property type="entry name" value="Cytochrome P450 monooxygenase"/>
    <property type="match status" value="1"/>
</dbReference>
<dbReference type="Gene3D" id="1.10.630.10">
    <property type="entry name" value="Cytochrome P450"/>
    <property type="match status" value="1"/>
</dbReference>
<dbReference type="InterPro" id="IPR001128">
    <property type="entry name" value="Cyt_P450"/>
</dbReference>
<dbReference type="InterPro" id="IPR002403">
    <property type="entry name" value="Cyt_P450_E_grp-IV"/>
</dbReference>
<dbReference type="InterPro" id="IPR036396">
    <property type="entry name" value="Cyt_P450_sf"/>
</dbReference>
<dbReference type="InterPro" id="IPR050121">
    <property type="entry name" value="Cytochrome_P450_monoxygenase"/>
</dbReference>
<dbReference type="PANTHER" id="PTHR24305">
    <property type="entry name" value="CYTOCHROME P450"/>
    <property type="match status" value="1"/>
</dbReference>
<dbReference type="PANTHER" id="PTHR24305:SF77">
    <property type="entry name" value="CYTOCHROME P450 MONOOXYGENASE"/>
    <property type="match status" value="1"/>
</dbReference>
<dbReference type="Pfam" id="PF00067">
    <property type="entry name" value="p450"/>
    <property type="match status" value="1"/>
</dbReference>
<dbReference type="PRINTS" id="PR00465">
    <property type="entry name" value="EP450IV"/>
</dbReference>
<dbReference type="PRINTS" id="PR00385">
    <property type="entry name" value="P450"/>
</dbReference>
<dbReference type="SUPFAM" id="SSF48264">
    <property type="entry name" value="Cytochrome P450"/>
    <property type="match status" value="1"/>
</dbReference>
<protein>
    <recommendedName>
        <fullName evidence="5">Cytochrome P450 monooxygenase ABA1</fullName>
        <ecNumber evidence="7">1.-.-.-</ecNumber>
    </recommendedName>
    <alternativeName>
        <fullName evidence="5">Abscisic acid biosynthesis protein 1</fullName>
    </alternativeName>
</protein>
<reference key="1">
    <citation type="journal article" date="2005" name="Nature">
        <title>The genome sequence of the rice blast fungus Magnaporthe grisea.</title>
        <authorList>
            <person name="Dean R.A."/>
            <person name="Talbot N.J."/>
            <person name="Ebbole D.J."/>
            <person name="Farman M.L."/>
            <person name="Mitchell T.K."/>
            <person name="Orbach M.J."/>
            <person name="Thon M.R."/>
            <person name="Kulkarni R."/>
            <person name="Xu J.-R."/>
            <person name="Pan H."/>
            <person name="Read N.D."/>
            <person name="Lee Y.-H."/>
            <person name="Carbone I."/>
            <person name="Brown D."/>
            <person name="Oh Y.Y."/>
            <person name="Donofrio N."/>
            <person name="Jeong J.S."/>
            <person name="Soanes D.M."/>
            <person name="Djonovic S."/>
            <person name="Kolomiets E."/>
            <person name="Rehmeyer C."/>
            <person name="Li W."/>
            <person name="Harding M."/>
            <person name="Kim S."/>
            <person name="Lebrun M.-H."/>
            <person name="Bohnert H."/>
            <person name="Coughlan S."/>
            <person name="Butler J."/>
            <person name="Calvo S.E."/>
            <person name="Ma L.-J."/>
            <person name="Nicol R."/>
            <person name="Purcell S."/>
            <person name="Nusbaum C."/>
            <person name="Galagan J.E."/>
            <person name="Birren B.W."/>
        </authorList>
    </citation>
    <scope>NUCLEOTIDE SEQUENCE [LARGE SCALE GENOMIC DNA]</scope>
    <source>
        <strain>70-15 / ATCC MYA-4617 / FGSC 8958</strain>
    </source>
</reference>
<reference key="2">
    <citation type="journal article" date="2015" name="Front. Plant Sci.">
        <title>Crucial roles of abscisic acid biogenesis in virulence of rice blast fungus Magnaporthe oryzae.</title>
        <authorList>
            <person name="Spence C.A."/>
            <person name="Lakshmanan V."/>
            <person name="Donofrio N."/>
            <person name="Bais H.P."/>
        </authorList>
    </citation>
    <scope>IDENTIFICATION</scope>
    <scope>INDUCTION</scope>
    <scope>FUNCTION</scope>
    <scope>PATHWAY</scope>
</reference>
<reference key="3">
    <citation type="journal article" date="2017" name="Front. Plant Sci.">
        <title>Abscisic acid as pathogen effector and immune regulator.</title>
        <authorList>
            <person name="Lievens L."/>
            <person name="Pollier J."/>
            <person name="Goossens A."/>
            <person name="Beyaert R."/>
            <person name="Staal J."/>
        </authorList>
    </citation>
    <scope>FUNCTION</scope>
</reference>